<proteinExistence type="inferred from homology"/>
<keyword id="KW-0004">4Fe-4S</keyword>
<keyword id="KW-0067">ATP-binding</keyword>
<keyword id="KW-0963">Cytoplasm</keyword>
<keyword id="KW-0408">Iron</keyword>
<keyword id="KW-0411">Iron-sulfur</keyword>
<keyword id="KW-0460">Magnesium</keyword>
<keyword id="KW-0479">Metal-binding</keyword>
<keyword id="KW-0547">Nucleotide-binding</keyword>
<keyword id="KW-0694">RNA-binding</keyword>
<keyword id="KW-0808">Transferase</keyword>
<keyword id="KW-0819">tRNA processing</keyword>
<keyword id="KW-0820">tRNA-binding</keyword>
<reference key="1">
    <citation type="submission" date="2006-08" db="EMBL/GenBank/DDBJ databases">
        <title>Complete sequence of chromosome 1 of Burkholderia cepacia AMMD.</title>
        <authorList>
            <person name="Copeland A."/>
            <person name="Lucas S."/>
            <person name="Lapidus A."/>
            <person name="Barry K."/>
            <person name="Detter J.C."/>
            <person name="Glavina del Rio T."/>
            <person name="Hammon N."/>
            <person name="Israni S."/>
            <person name="Pitluck S."/>
            <person name="Bruce D."/>
            <person name="Chain P."/>
            <person name="Malfatti S."/>
            <person name="Shin M."/>
            <person name="Vergez L."/>
            <person name="Schmutz J."/>
            <person name="Larimer F."/>
            <person name="Land M."/>
            <person name="Hauser L."/>
            <person name="Kyrpides N."/>
            <person name="Kim E."/>
            <person name="Parke J."/>
            <person name="Coenye T."/>
            <person name="Konstantinidis K."/>
            <person name="Ramette A."/>
            <person name="Tiedje J."/>
            <person name="Richardson P."/>
        </authorList>
    </citation>
    <scope>NUCLEOTIDE SEQUENCE [LARGE SCALE GENOMIC DNA]</scope>
    <source>
        <strain>ATCC BAA-244 / DSM 16087 / CCUG 44356 / LMG 19182 / AMMD</strain>
    </source>
</reference>
<dbReference type="EC" id="2.8.1.-" evidence="1"/>
<dbReference type="EMBL" id="CP000440">
    <property type="protein sequence ID" value="ABI88583.1"/>
    <property type="molecule type" value="Genomic_DNA"/>
</dbReference>
<dbReference type="RefSeq" id="WP_011658111.1">
    <property type="nucleotide sequence ID" value="NC_008390.1"/>
</dbReference>
<dbReference type="SMR" id="Q0BB90"/>
<dbReference type="GeneID" id="93084771"/>
<dbReference type="KEGG" id="bam:Bamb_3027"/>
<dbReference type="PATRIC" id="fig|339670.21.peg.1842"/>
<dbReference type="eggNOG" id="COG0037">
    <property type="taxonomic scope" value="Bacteria"/>
</dbReference>
<dbReference type="Proteomes" id="UP000000662">
    <property type="component" value="Chromosome 1"/>
</dbReference>
<dbReference type="GO" id="GO:0005737">
    <property type="term" value="C:cytoplasm"/>
    <property type="evidence" value="ECO:0007669"/>
    <property type="project" value="UniProtKB-SubCell"/>
</dbReference>
<dbReference type="GO" id="GO:0051539">
    <property type="term" value="F:4 iron, 4 sulfur cluster binding"/>
    <property type="evidence" value="ECO:0007669"/>
    <property type="project" value="UniProtKB-UniRule"/>
</dbReference>
<dbReference type="GO" id="GO:0005524">
    <property type="term" value="F:ATP binding"/>
    <property type="evidence" value="ECO:0007669"/>
    <property type="project" value="UniProtKB-UniRule"/>
</dbReference>
<dbReference type="GO" id="GO:0000287">
    <property type="term" value="F:magnesium ion binding"/>
    <property type="evidence" value="ECO:0007669"/>
    <property type="project" value="UniProtKB-UniRule"/>
</dbReference>
<dbReference type="GO" id="GO:0016783">
    <property type="term" value="F:sulfurtransferase activity"/>
    <property type="evidence" value="ECO:0007669"/>
    <property type="project" value="UniProtKB-UniRule"/>
</dbReference>
<dbReference type="GO" id="GO:0000049">
    <property type="term" value="F:tRNA binding"/>
    <property type="evidence" value="ECO:0007669"/>
    <property type="project" value="UniProtKB-KW"/>
</dbReference>
<dbReference type="GO" id="GO:0034227">
    <property type="term" value="P:tRNA thio-modification"/>
    <property type="evidence" value="ECO:0007669"/>
    <property type="project" value="UniProtKB-UniRule"/>
</dbReference>
<dbReference type="CDD" id="cd24138">
    <property type="entry name" value="TtcA-like"/>
    <property type="match status" value="1"/>
</dbReference>
<dbReference type="Gene3D" id="3.40.50.620">
    <property type="entry name" value="HUPs"/>
    <property type="match status" value="1"/>
</dbReference>
<dbReference type="HAMAP" id="MF_01850">
    <property type="entry name" value="TtcA"/>
    <property type="match status" value="1"/>
</dbReference>
<dbReference type="InterPro" id="IPR014729">
    <property type="entry name" value="Rossmann-like_a/b/a_fold"/>
</dbReference>
<dbReference type="InterPro" id="IPR011063">
    <property type="entry name" value="TilS/TtcA_N"/>
</dbReference>
<dbReference type="InterPro" id="IPR012089">
    <property type="entry name" value="tRNA_Cyd_32_2_STrfase"/>
</dbReference>
<dbReference type="NCBIfam" id="NF007972">
    <property type="entry name" value="PRK10696.1"/>
    <property type="match status" value="1"/>
</dbReference>
<dbReference type="PANTHER" id="PTHR43686:SF1">
    <property type="entry name" value="AMINOTRAN_5 DOMAIN-CONTAINING PROTEIN"/>
    <property type="match status" value="1"/>
</dbReference>
<dbReference type="PANTHER" id="PTHR43686">
    <property type="entry name" value="SULFURTRANSFERASE-RELATED"/>
    <property type="match status" value="1"/>
</dbReference>
<dbReference type="Pfam" id="PF01171">
    <property type="entry name" value="ATP_bind_3"/>
    <property type="match status" value="1"/>
</dbReference>
<dbReference type="SUPFAM" id="SSF52402">
    <property type="entry name" value="Adenine nucleotide alpha hydrolases-like"/>
    <property type="match status" value="1"/>
</dbReference>
<evidence type="ECO:0000255" key="1">
    <source>
        <dbReference type="HAMAP-Rule" id="MF_01850"/>
    </source>
</evidence>
<feature type="chain" id="PRO_0000348679" description="tRNA-cytidine(32) 2-sulfurtransferase">
    <location>
        <begin position="1"/>
        <end position="334"/>
    </location>
</feature>
<feature type="short sequence motif" description="PP-loop motif" evidence="1">
    <location>
        <begin position="74"/>
        <end position="79"/>
    </location>
</feature>
<feature type="binding site" evidence="1">
    <location>
        <position position="149"/>
    </location>
    <ligand>
        <name>[4Fe-4S] cluster</name>
        <dbReference type="ChEBI" id="CHEBI:49883"/>
    </ligand>
</feature>
<feature type="binding site" evidence="1">
    <location>
        <position position="152"/>
    </location>
    <ligand>
        <name>[4Fe-4S] cluster</name>
        <dbReference type="ChEBI" id="CHEBI:49883"/>
    </ligand>
</feature>
<feature type="binding site" evidence="1">
    <location>
        <position position="240"/>
    </location>
    <ligand>
        <name>[4Fe-4S] cluster</name>
        <dbReference type="ChEBI" id="CHEBI:49883"/>
    </ligand>
</feature>
<accession>Q0BB90</accession>
<organism>
    <name type="scientific">Burkholderia ambifaria (strain ATCC BAA-244 / DSM 16087 / CCUG 44356 / LMG 19182 / AMMD)</name>
    <name type="common">Burkholderia cepacia (strain AMMD)</name>
    <dbReference type="NCBI Taxonomy" id="339670"/>
    <lineage>
        <taxon>Bacteria</taxon>
        <taxon>Pseudomonadati</taxon>
        <taxon>Pseudomonadota</taxon>
        <taxon>Betaproteobacteria</taxon>
        <taxon>Burkholderiales</taxon>
        <taxon>Burkholderiaceae</taxon>
        <taxon>Burkholderia</taxon>
        <taxon>Burkholderia cepacia complex</taxon>
    </lineage>
</organism>
<protein>
    <recommendedName>
        <fullName evidence="1">tRNA-cytidine(32) 2-sulfurtransferase</fullName>
        <ecNumber evidence="1">2.8.1.-</ecNumber>
    </recommendedName>
    <alternativeName>
        <fullName evidence="1">Two-thiocytidine biosynthesis protein A</fullName>
    </alternativeName>
    <alternativeName>
        <fullName evidence="1">tRNA 2-thiocytidine biosynthesis protein TtcA</fullName>
    </alternativeName>
</protein>
<name>TTCA_BURCM</name>
<gene>
    <name evidence="1" type="primary">ttcA</name>
    <name type="ordered locus">Bamb_3027</name>
</gene>
<comment type="function">
    <text evidence="1">Catalyzes the ATP-dependent 2-thiolation of cytidine in position 32 of tRNA, to form 2-thiocytidine (s(2)C32). The sulfur atoms are provided by the cysteine/cysteine desulfurase (IscS) system.</text>
</comment>
<comment type="catalytic activity">
    <reaction evidence="1">
        <text>cytidine(32) in tRNA + S-sulfanyl-L-cysteinyl-[cysteine desulfurase] + AH2 + ATP = 2-thiocytidine(32) in tRNA + L-cysteinyl-[cysteine desulfurase] + A + AMP + diphosphate + H(+)</text>
        <dbReference type="Rhea" id="RHEA:57048"/>
        <dbReference type="Rhea" id="RHEA-COMP:10288"/>
        <dbReference type="Rhea" id="RHEA-COMP:12157"/>
        <dbReference type="Rhea" id="RHEA-COMP:12158"/>
        <dbReference type="Rhea" id="RHEA-COMP:14821"/>
        <dbReference type="ChEBI" id="CHEBI:13193"/>
        <dbReference type="ChEBI" id="CHEBI:15378"/>
        <dbReference type="ChEBI" id="CHEBI:17499"/>
        <dbReference type="ChEBI" id="CHEBI:29950"/>
        <dbReference type="ChEBI" id="CHEBI:30616"/>
        <dbReference type="ChEBI" id="CHEBI:33019"/>
        <dbReference type="ChEBI" id="CHEBI:61963"/>
        <dbReference type="ChEBI" id="CHEBI:82748"/>
        <dbReference type="ChEBI" id="CHEBI:141453"/>
        <dbReference type="ChEBI" id="CHEBI:456215"/>
    </reaction>
    <physiologicalReaction direction="left-to-right" evidence="1">
        <dbReference type="Rhea" id="RHEA:57049"/>
    </physiologicalReaction>
</comment>
<comment type="cofactor">
    <cofactor evidence="1">
        <name>Mg(2+)</name>
        <dbReference type="ChEBI" id="CHEBI:18420"/>
    </cofactor>
</comment>
<comment type="cofactor">
    <cofactor evidence="1">
        <name>[4Fe-4S] cluster</name>
        <dbReference type="ChEBI" id="CHEBI:49883"/>
    </cofactor>
    <text evidence="1">Binds 1 [4Fe-4S] cluster per subunit. The cluster is chelated by three Cys residues, the fourth Fe has a free coordination site that may bind a sulfur atom transferred from the persulfide of IscS.</text>
</comment>
<comment type="pathway">
    <text evidence="1">tRNA modification.</text>
</comment>
<comment type="subunit">
    <text evidence="1">Homodimer.</text>
</comment>
<comment type="subcellular location">
    <subcellularLocation>
        <location evidence="1">Cytoplasm</location>
    </subcellularLocation>
</comment>
<comment type="miscellaneous">
    <text evidence="1">The thiolation reaction likely consists of two steps: a first activation step by ATP to form an adenylated intermediate of the target base of tRNA, and a second nucleophilic substitution step of the sulfur (S) atom supplied by the hydrosulfide attached to the Fe-S cluster.</text>
</comment>
<comment type="similarity">
    <text evidence="1">Belongs to the TtcA family.</text>
</comment>
<sequence>MNAPHTHDTVADGAAIEATVADIADTGRRALTRREQKEAYENNKLFKRIVRQVGQAIGDYNMIEQGDKVMVCLSGGKDSYAMLDVLLRLRERAPIDFDIVAVNLDQKQPGFPEHVLPEYLTQIGVPFHIENQDTYSIVKRLVPEGKTTCSLCSRLRRGILYRVAGELGATKIALGHHRDDILQTLLLNMFYGGKLKGMPPKLQSDDGRNVVIRPLAYVKETDLEKFAELREFPIIPCNLCGSQPNLKRAEMKALIRDWDKRFPGRVDNMFSALANVVPSHLMDTTQFPFASLRATGQADPQGDIAFDEEPCASGDDTATRDGARPISIVQFDDL</sequence>